<organism>
    <name type="scientific">Escherichia fergusonii (strain ATCC 35469 / DSM 13698 / CCUG 18766 / IAM 14443 / JCM 21226 / LMG 7866 / NBRC 102419 / NCTC 12128 / CDC 0568-73)</name>
    <dbReference type="NCBI Taxonomy" id="585054"/>
    <lineage>
        <taxon>Bacteria</taxon>
        <taxon>Pseudomonadati</taxon>
        <taxon>Pseudomonadota</taxon>
        <taxon>Gammaproteobacteria</taxon>
        <taxon>Enterobacterales</taxon>
        <taxon>Enterobacteriaceae</taxon>
        <taxon>Escherichia</taxon>
    </lineage>
</organism>
<proteinExistence type="inferred from homology"/>
<feature type="chain" id="PRO_1000200548" description="UvrABC system protein B">
    <location>
        <begin position="1"/>
        <end position="673"/>
    </location>
</feature>
<feature type="domain" description="Helicase ATP-binding" evidence="1">
    <location>
        <begin position="26"/>
        <end position="183"/>
    </location>
</feature>
<feature type="domain" description="Helicase C-terminal" evidence="1">
    <location>
        <begin position="431"/>
        <end position="597"/>
    </location>
</feature>
<feature type="domain" description="UVR" evidence="1">
    <location>
        <begin position="633"/>
        <end position="668"/>
    </location>
</feature>
<feature type="region of interest" description="Disordered" evidence="2">
    <location>
        <begin position="608"/>
        <end position="627"/>
    </location>
</feature>
<feature type="short sequence motif" description="Beta-hairpin">
    <location>
        <begin position="92"/>
        <end position="115"/>
    </location>
</feature>
<feature type="binding site" evidence="1">
    <location>
        <begin position="39"/>
        <end position="46"/>
    </location>
    <ligand>
        <name>ATP</name>
        <dbReference type="ChEBI" id="CHEBI:30616"/>
    </ligand>
</feature>
<evidence type="ECO:0000255" key="1">
    <source>
        <dbReference type="HAMAP-Rule" id="MF_00204"/>
    </source>
</evidence>
<evidence type="ECO:0000256" key="2">
    <source>
        <dbReference type="SAM" id="MobiDB-lite"/>
    </source>
</evidence>
<comment type="function">
    <text evidence="1">The UvrABC repair system catalyzes the recognition and processing of DNA lesions. A damage recognition complex composed of 2 UvrA and 2 UvrB subunits scans DNA for abnormalities. Upon binding of the UvrA(2)B(2) complex to a putative damaged site, the DNA wraps around one UvrB monomer. DNA wrap is dependent on ATP binding by UvrB and probably causes local melting of the DNA helix, facilitating insertion of UvrB beta-hairpin between the DNA strands. Then UvrB probes one DNA strand for the presence of a lesion. If a lesion is found the UvrA subunits dissociate and the UvrB-DNA preincision complex is formed. This complex is subsequently bound by UvrC and the second UvrB is released. If no lesion is found, the DNA wraps around the other UvrB subunit that will check the other stand for damage.</text>
</comment>
<comment type="subunit">
    <text evidence="1">Forms a heterotetramer with UvrA during the search for lesions. Interacts with UvrC in an incision complex.</text>
</comment>
<comment type="subcellular location">
    <subcellularLocation>
        <location evidence="1">Cytoplasm</location>
    </subcellularLocation>
</comment>
<comment type="domain">
    <text evidence="1">The beta-hairpin motif is involved in DNA binding.</text>
</comment>
<comment type="similarity">
    <text evidence="1">Belongs to the UvrB family.</text>
</comment>
<keyword id="KW-0067">ATP-binding</keyword>
<keyword id="KW-0963">Cytoplasm</keyword>
<keyword id="KW-0227">DNA damage</keyword>
<keyword id="KW-0228">DNA excision</keyword>
<keyword id="KW-0234">DNA repair</keyword>
<keyword id="KW-0267">Excision nuclease</keyword>
<keyword id="KW-0347">Helicase</keyword>
<keyword id="KW-0378">Hydrolase</keyword>
<keyword id="KW-0547">Nucleotide-binding</keyword>
<keyword id="KW-0742">SOS response</keyword>
<gene>
    <name evidence="1" type="primary">uvrB</name>
    <name type="ordered locus">EFER_2332</name>
</gene>
<name>UVRB_ESCF3</name>
<sequence>MSKPFKLNSAFKPSGDQPEAIRRLEEGLEDGLAHQTLLGVTGSGKTFTIANVIADLQRPTMVLAPNKTLAAQLYGEMKEFFPENAVEYFVSYYDYYQPEAYVPSSDTFIEKDASVNEHIEQMRLSATKAMLERRDVVVVASVSAIYGLGDPDLYLKMMLHLTVGMIIDQRAILRRLAELQYTRNDQAFQRGTFRVRGEVIDIFPAESDDIALRVELFDEEVERLSLFDPLTGQIVSTIPRFTIYPKTHYVTPRERIVQAMEEIKEELAARRKVLLENNKLLEEQRLTQRTQFDLEMMNELGYCSGIENYSRFLSGRGPGEPPPTLFDYLPADGLLVVDESHVTIPQIGGMYRGDRARKETLVEYGFRLPSALDNRPLKFEEFEALAPQTIYVSATPGNYELEKSGGDVVDQVVRPTGLLDPIIEVRPVATQVDDLLSEIRQRAAINERVLVTTLTKRMAEDLTEYLEEHGERVRYLHSDIDTVERMEIIRDLRLGEFDVLVGINLLREGLDMPEVSLVAILDADKEGFLRSERSLIQTIGRAARNVNGKAILYGDKITPSMAKAIGETERRREKQQKYNEEHGITPQGLNKKVVDILALGQNIAKTKAKGRGKSRPIVEPDNVPMDMSPKALQQKIHELEGLMMQHAQNLEFEEAAQIRDQLHQLRELFIAAS</sequence>
<protein>
    <recommendedName>
        <fullName evidence="1">UvrABC system protein B</fullName>
        <shortName evidence="1">Protein UvrB</shortName>
    </recommendedName>
    <alternativeName>
        <fullName evidence="1">Excinuclease ABC subunit B</fullName>
    </alternativeName>
</protein>
<reference key="1">
    <citation type="journal article" date="2009" name="PLoS Genet.">
        <title>Organised genome dynamics in the Escherichia coli species results in highly diverse adaptive paths.</title>
        <authorList>
            <person name="Touchon M."/>
            <person name="Hoede C."/>
            <person name="Tenaillon O."/>
            <person name="Barbe V."/>
            <person name="Baeriswyl S."/>
            <person name="Bidet P."/>
            <person name="Bingen E."/>
            <person name="Bonacorsi S."/>
            <person name="Bouchier C."/>
            <person name="Bouvet O."/>
            <person name="Calteau A."/>
            <person name="Chiapello H."/>
            <person name="Clermont O."/>
            <person name="Cruveiller S."/>
            <person name="Danchin A."/>
            <person name="Diard M."/>
            <person name="Dossat C."/>
            <person name="Karoui M.E."/>
            <person name="Frapy E."/>
            <person name="Garry L."/>
            <person name="Ghigo J.M."/>
            <person name="Gilles A.M."/>
            <person name="Johnson J."/>
            <person name="Le Bouguenec C."/>
            <person name="Lescat M."/>
            <person name="Mangenot S."/>
            <person name="Martinez-Jehanne V."/>
            <person name="Matic I."/>
            <person name="Nassif X."/>
            <person name="Oztas S."/>
            <person name="Petit M.A."/>
            <person name="Pichon C."/>
            <person name="Rouy Z."/>
            <person name="Ruf C.S."/>
            <person name="Schneider D."/>
            <person name="Tourret J."/>
            <person name="Vacherie B."/>
            <person name="Vallenet D."/>
            <person name="Medigue C."/>
            <person name="Rocha E.P.C."/>
            <person name="Denamur E."/>
        </authorList>
    </citation>
    <scope>NUCLEOTIDE SEQUENCE [LARGE SCALE GENOMIC DNA]</scope>
    <source>
        <strain>ATCC 35469 / DSM 13698 / BCRC 15582 / CCUG 18766 / IAM 14443 / JCM 21226 / LMG 7866 / NBRC 102419 / NCTC 12128 / CDC 0568-73</strain>
    </source>
</reference>
<dbReference type="EMBL" id="CU928158">
    <property type="protein sequence ID" value="CAQ89833.1"/>
    <property type="molecule type" value="Genomic_DNA"/>
</dbReference>
<dbReference type="RefSeq" id="WP_000042541.1">
    <property type="nucleotide sequence ID" value="NC_011740.1"/>
</dbReference>
<dbReference type="SMR" id="B7LJY3"/>
<dbReference type="GeneID" id="75056637"/>
<dbReference type="KEGG" id="efe:EFER_2332"/>
<dbReference type="HOGENOM" id="CLU_009621_2_1_6"/>
<dbReference type="OrthoDB" id="9806651at2"/>
<dbReference type="Proteomes" id="UP000000745">
    <property type="component" value="Chromosome"/>
</dbReference>
<dbReference type="GO" id="GO:0005737">
    <property type="term" value="C:cytoplasm"/>
    <property type="evidence" value="ECO:0007669"/>
    <property type="project" value="UniProtKB-SubCell"/>
</dbReference>
<dbReference type="GO" id="GO:0009380">
    <property type="term" value="C:excinuclease repair complex"/>
    <property type="evidence" value="ECO:0007669"/>
    <property type="project" value="InterPro"/>
</dbReference>
<dbReference type="GO" id="GO:0005524">
    <property type="term" value="F:ATP binding"/>
    <property type="evidence" value="ECO:0007669"/>
    <property type="project" value="UniProtKB-UniRule"/>
</dbReference>
<dbReference type="GO" id="GO:0016887">
    <property type="term" value="F:ATP hydrolysis activity"/>
    <property type="evidence" value="ECO:0007669"/>
    <property type="project" value="InterPro"/>
</dbReference>
<dbReference type="GO" id="GO:0003677">
    <property type="term" value="F:DNA binding"/>
    <property type="evidence" value="ECO:0007669"/>
    <property type="project" value="UniProtKB-UniRule"/>
</dbReference>
<dbReference type="GO" id="GO:0009381">
    <property type="term" value="F:excinuclease ABC activity"/>
    <property type="evidence" value="ECO:0007669"/>
    <property type="project" value="UniProtKB-UniRule"/>
</dbReference>
<dbReference type="GO" id="GO:0004386">
    <property type="term" value="F:helicase activity"/>
    <property type="evidence" value="ECO:0007669"/>
    <property type="project" value="UniProtKB-KW"/>
</dbReference>
<dbReference type="GO" id="GO:0006289">
    <property type="term" value="P:nucleotide-excision repair"/>
    <property type="evidence" value="ECO:0007669"/>
    <property type="project" value="UniProtKB-UniRule"/>
</dbReference>
<dbReference type="GO" id="GO:0009432">
    <property type="term" value="P:SOS response"/>
    <property type="evidence" value="ECO:0007669"/>
    <property type="project" value="UniProtKB-UniRule"/>
</dbReference>
<dbReference type="CDD" id="cd17916">
    <property type="entry name" value="DEXHc_UvrB"/>
    <property type="match status" value="1"/>
</dbReference>
<dbReference type="CDD" id="cd18790">
    <property type="entry name" value="SF2_C_UvrB"/>
    <property type="match status" value="1"/>
</dbReference>
<dbReference type="FunFam" id="3.40.50.300:FF:000257">
    <property type="entry name" value="UvrABC system protein B"/>
    <property type="match status" value="1"/>
</dbReference>
<dbReference type="FunFam" id="3.40.50.300:FF:000401">
    <property type="entry name" value="UvrABC system protein B"/>
    <property type="match status" value="1"/>
</dbReference>
<dbReference type="FunFam" id="3.40.50.300:FF:000477">
    <property type="entry name" value="UvrABC system protein B"/>
    <property type="match status" value="1"/>
</dbReference>
<dbReference type="Gene3D" id="3.40.50.300">
    <property type="entry name" value="P-loop containing nucleotide triphosphate hydrolases"/>
    <property type="match status" value="3"/>
</dbReference>
<dbReference type="Gene3D" id="4.10.860.10">
    <property type="entry name" value="UVR domain"/>
    <property type="match status" value="1"/>
</dbReference>
<dbReference type="HAMAP" id="MF_00204">
    <property type="entry name" value="UvrB"/>
    <property type="match status" value="1"/>
</dbReference>
<dbReference type="InterPro" id="IPR006935">
    <property type="entry name" value="Helicase/UvrB_N"/>
</dbReference>
<dbReference type="InterPro" id="IPR014001">
    <property type="entry name" value="Helicase_ATP-bd"/>
</dbReference>
<dbReference type="InterPro" id="IPR001650">
    <property type="entry name" value="Helicase_C-like"/>
</dbReference>
<dbReference type="InterPro" id="IPR027417">
    <property type="entry name" value="P-loop_NTPase"/>
</dbReference>
<dbReference type="InterPro" id="IPR001943">
    <property type="entry name" value="UVR_dom"/>
</dbReference>
<dbReference type="InterPro" id="IPR036876">
    <property type="entry name" value="UVR_dom_sf"/>
</dbReference>
<dbReference type="InterPro" id="IPR004807">
    <property type="entry name" value="UvrB"/>
</dbReference>
<dbReference type="InterPro" id="IPR041471">
    <property type="entry name" value="UvrB_inter"/>
</dbReference>
<dbReference type="InterPro" id="IPR024759">
    <property type="entry name" value="UvrB_YAD/RRR_dom"/>
</dbReference>
<dbReference type="NCBIfam" id="NF003673">
    <property type="entry name" value="PRK05298.1"/>
    <property type="match status" value="1"/>
</dbReference>
<dbReference type="NCBIfam" id="TIGR00631">
    <property type="entry name" value="uvrb"/>
    <property type="match status" value="1"/>
</dbReference>
<dbReference type="PANTHER" id="PTHR24029">
    <property type="entry name" value="UVRABC SYSTEM PROTEIN B"/>
    <property type="match status" value="1"/>
</dbReference>
<dbReference type="PANTHER" id="PTHR24029:SF0">
    <property type="entry name" value="UVRABC SYSTEM PROTEIN B"/>
    <property type="match status" value="1"/>
</dbReference>
<dbReference type="Pfam" id="PF00271">
    <property type="entry name" value="Helicase_C"/>
    <property type="match status" value="1"/>
</dbReference>
<dbReference type="Pfam" id="PF04851">
    <property type="entry name" value="ResIII"/>
    <property type="match status" value="1"/>
</dbReference>
<dbReference type="Pfam" id="PF02151">
    <property type="entry name" value="UVR"/>
    <property type="match status" value="1"/>
</dbReference>
<dbReference type="Pfam" id="PF12344">
    <property type="entry name" value="UvrB"/>
    <property type="match status" value="1"/>
</dbReference>
<dbReference type="Pfam" id="PF17757">
    <property type="entry name" value="UvrB_inter"/>
    <property type="match status" value="1"/>
</dbReference>
<dbReference type="SMART" id="SM00487">
    <property type="entry name" value="DEXDc"/>
    <property type="match status" value="1"/>
</dbReference>
<dbReference type="SMART" id="SM00490">
    <property type="entry name" value="HELICc"/>
    <property type="match status" value="1"/>
</dbReference>
<dbReference type="SUPFAM" id="SSF46600">
    <property type="entry name" value="C-terminal UvrC-binding domain of UvrB"/>
    <property type="match status" value="1"/>
</dbReference>
<dbReference type="SUPFAM" id="SSF52540">
    <property type="entry name" value="P-loop containing nucleoside triphosphate hydrolases"/>
    <property type="match status" value="2"/>
</dbReference>
<dbReference type="PROSITE" id="PS51192">
    <property type="entry name" value="HELICASE_ATP_BIND_1"/>
    <property type="match status" value="1"/>
</dbReference>
<dbReference type="PROSITE" id="PS51194">
    <property type="entry name" value="HELICASE_CTER"/>
    <property type="match status" value="1"/>
</dbReference>
<dbReference type="PROSITE" id="PS50151">
    <property type="entry name" value="UVR"/>
    <property type="match status" value="1"/>
</dbReference>
<accession>B7LJY3</accession>